<feature type="chain" id="PRO_0000271339" description="Solute carrier family 49 member 4">
    <location>
        <begin position="1"/>
        <end position="478"/>
    </location>
</feature>
<feature type="topological domain" description="Cytoplasmic" evidence="2">
    <location>
        <begin position="1"/>
        <end position="51"/>
    </location>
</feature>
<feature type="transmembrane region" description="Helical" evidence="2">
    <location>
        <begin position="52"/>
        <end position="72"/>
    </location>
</feature>
<feature type="topological domain" description="Lumenal" evidence="2">
    <location>
        <begin position="73"/>
        <end position="89"/>
    </location>
</feature>
<feature type="transmembrane region" description="Helical" evidence="2">
    <location>
        <begin position="90"/>
        <end position="110"/>
    </location>
</feature>
<feature type="topological domain" description="Cytoplasmic" evidence="2">
    <location>
        <begin position="111"/>
        <end position="117"/>
    </location>
</feature>
<feature type="transmembrane region" description="Helical" evidence="2">
    <location>
        <begin position="118"/>
        <end position="138"/>
    </location>
</feature>
<feature type="topological domain" description="Lumenal" evidence="2">
    <location>
        <begin position="139"/>
        <end position="152"/>
    </location>
</feature>
<feature type="transmembrane region" description="Helical" evidence="2">
    <location>
        <begin position="153"/>
        <end position="173"/>
    </location>
</feature>
<feature type="topological domain" description="Cytoplasmic" evidence="2">
    <location>
        <begin position="174"/>
        <end position="184"/>
    </location>
</feature>
<feature type="transmembrane region" description="Helical" evidence="2">
    <location>
        <begin position="185"/>
        <end position="205"/>
    </location>
</feature>
<feature type="topological domain" description="Lumenal" evidence="2">
    <location>
        <begin position="206"/>
        <end position="229"/>
    </location>
</feature>
<feature type="transmembrane region" description="Helical" evidence="2">
    <location>
        <begin position="230"/>
        <end position="250"/>
    </location>
</feature>
<feature type="topological domain" description="Cytoplasmic" evidence="2">
    <location>
        <begin position="251"/>
        <end position="281"/>
    </location>
</feature>
<feature type="transmembrane region" description="Helical" evidence="2">
    <location>
        <begin position="282"/>
        <end position="302"/>
    </location>
</feature>
<feature type="topological domain" description="Lumenal" evidence="2">
    <location>
        <begin position="303"/>
        <end position="314"/>
    </location>
</feature>
<feature type="transmembrane region" description="Helical" evidence="2">
    <location>
        <begin position="315"/>
        <end position="335"/>
    </location>
</feature>
<feature type="topological domain" description="Cytoplasmic" evidence="2">
    <location>
        <begin position="336"/>
        <end position="347"/>
    </location>
</feature>
<feature type="transmembrane region" description="Helical" evidence="2">
    <location>
        <begin position="348"/>
        <end position="368"/>
    </location>
</feature>
<feature type="topological domain" description="Lumenal" evidence="2">
    <location>
        <begin position="369"/>
        <end position="384"/>
    </location>
</feature>
<feature type="transmembrane region" description="Helical" evidence="2">
    <location>
        <begin position="385"/>
        <end position="405"/>
    </location>
</feature>
<feature type="topological domain" description="Cytoplasmic" evidence="2">
    <location>
        <begin position="406"/>
        <end position="414"/>
    </location>
</feature>
<feature type="transmembrane region" description="Helical" evidence="2">
    <location>
        <begin position="415"/>
        <end position="435"/>
    </location>
</feature>
<feature type="topological domain" description="Lumenal" evidence="2">
    <location>
        <begin position="436"/>
        <end position="442"/>
    </location>
</feature>
<feature type="transmembrane region" description="Helical" evidence="2">
    <location>
        <begin position="443"/>
        <end position="463"/>
    </location>
</feature>
<feature type="topological domain" description="Cytoplasmic" evidence="2">
    <location>
        <begin position="464"/>
        <end position="478"/>
    </location>
</feature>
<feature type="region of interest" description="Disordered" evidence="3">
    <location>
        <begin position="1"/>
        <end position="27"/>
    </location>
</feature>
<feature type="short sequence motif" description="Di-leucine motif; mediates lysosomal localization" evidence="1">
    <location>
        <begin position="15"/>
        <end position="16"/>
    </location>
</feature>
<feature type="glycosylation site" description="N-linked (GlcNAc...) asparagine" evidence="2">
    <location>
        <position position="209"/>
    </location>
</feature>
<proteinExistence type="evidence at transcript level"/>
<evidence type="ECO:0000250" key="1">
    <source>
        <dbReference type="UniProtKB" id="Q96SL1"/>
    </source>
</evidence>
<evidence type="ECO:0000255" key="2"/>
<evidence type="ECO:0000256" key="3">
    <source>
        <dbReference type="SAM" id="MobiDB-lite"/>
    </source>
</evidence>
<evidence type="ECO:0000305" key="4"/>
<evidence type="ECO:0000312" key="5">
    <source>
        <dbReference type="MGI" id="MGI:2387188"/>
    </source>
</evidence>
<accession>Q8BFQ6</accession>
<gene>
    <name type="primary">Slc49a4</name>
    <name evidence="5" type="synonym">Dirc2</name>
</gene>
<protein>
    <recommendedName>
        <fullName evidence="4">Solute carrier family 49 member 4</fullName>
    </recommendedName>
    <alternativeName>
        <fullName>Disrupted in renal carcinoma protein 2 homolog</fullName>
    </alternativeName>
</protein>
<comment type="function">
    <text evidence="1">Mediates H(+)-dependent pyridoxine transport.</text>
</comment>
<comment type="catalytic activity">
    <reaction evidence="1">
        <text>pyridoxine(out) + n H(+)(out) = pyridoxine(in) + n H(+)(in)</text>
        <dbReference type="Rhea" id="RHEA:76203"/>
        <dbReference type="ChEBI" id="CHEBI:15378"/>
        <dbReference type="ChEBI" id="CHEBI:16709"/>
    </reaction>
</comment>
<comment type="subcellular location">
    <subcellularLocation>
        <location evidence="1">Lysosome membrane</location>
        <topology evidence="2">Multi-pass membrane protein</topology>
    </subcellularLocation>
</comment>
<comment type="PTM">
    <text evidence="1">Cleaved in lysosomes by cathepsin L between Leu-214 and Ala-261, generating a N-glycosylated N-terminal and a non-glycosylated C-terminal fragment.</text>
</comment>
<comment type="similarity">
    <text evidence="4">Belongs to the major facilitator superfamily.</text>
</comment>
<dbReference type="EMBL" id="AK034214">
    <property type="protein sequence ID" value="BAC28634.1"/>
    <property type="molecule type" value="mRNA"/>
</dbReference>
<dbReference type="EMBL" id="AK172331">
    <property type="protein sequence ID" value="BAE42949.1"/>
    <property type="molecule type" value="mRNA"/>
</dbReference>
<dbReference type="EMBL" id="BC037460">
    <property type="protein sequence ID" value="AAH37460.1"/>
    <property type="molecule type" value="mRNA"/>
</dbReference>
<dbReference type="CCDS" id="CCDS28141.1"/>
<dbReference type="RefSeq" id="NP_705778.1">
    <property type="nucleotide sequence ID" value="NM_153550.4"/>
</dbReference>
<dbReference type="SMR" id="Q8BFQ6"/>
<dbReference type="FunCoup" id="Q8BFQ6">
    <property type="interactions" value="1462"/>
</dbReference>
<dbReference type="STRING" id="10090.ENSMUSP00000023554"/>
<dbReference type="GlyCosmos" id="Q8BFQ6">
    <property type="glycosylation" value="1 site, No reported glycans"/>
</dbReference>
<dbReference type="GlyGen" id="Q8BFQ6">
    <property type="glycosylation" value="1 site"/>
</dbReference>
<dbReference type="PhosphoSitePlus" id="Q8BFQ6"/>
<dbReference type="SwissPalm" id="Q8BFQ6"/>
<dbReference type="PaxDb" id="10090-ENSMUSP00000023554"/>
<dbReference type="ProteomicsDB" id="279665"/>
<dbReference type="Pumba" id="Q8BFQ6"/>
<dbReference type="Antibodypedia" id="32929">
    <property type="antibodies" value="119 antibodies from 21 providers"/>
</dbReference>
<dbReference type="DNASU" id="224132"/>
<dbReference type="Ensembl" id="ENSMUST00000023554.9">
    <property type="protein sequence ID" value="ENSMUSP00000023554.9"/>
    <property type="gene ID" value="ENSMUSG00000022848.9"/>
</dbReference>
<dbReference type="GeneID" id="224132"/>
<dbReference type="KEGG" id="mmu:224132"/>
<dbReference type="UCSC" id="uc007zbo.1">
    <property type="organism name" value="mouse"/>
</dbReference>
<dbReference type="AGR" id="MGI:2387188"/>
<dbReference type="CTD" id="84925"/>
<dbReference type="MGI" id="MGI:2387188">
    <property type="gene designation" value="Slc49a4"/>
</dbReference>
<dbReference type="VEuPathDB" id="HostDB:ENSMUSG00000022848"/>
<dbReference type="eggNOG" id="KOG2563">
    <property type="taxonomic scope" value="Eukaryota"/>
</dbReference>
<dbReference type="GeneTree" id="ENSGT01030000234625"/>
<dbReference type="HOGENOM" id="CLU_023132_4_1_1"/>
<dbReference type="InParanoid" id="Q8BFQ6"/>
<dbReference type="OMA" id="VCFRESY"/>
<dbReference type="OrthoDB" id="422206at2759"/>
<dbReference type="PhylomeDB" id="Q8BFQ6"/>
<dbReference type="TreeFam" id="TF314292"/>
<dbReference type="BioGRID-ORCS" id="224132">
    <property type="hits" value="4 hits in 78 CRISPR screens"/>
</dbReference>
<dbReference type="ChiTaRS" id="Dirc2">
    <property type="organism name" value="mouse"/>
</dbReference>
<dbReference type="PRO" id="PR:Q8BFQ6"/>
<dbReference type="Proteomes" id="UP000000589">
    <property type="component" value="Chromosome 16"/>
</dbReference>
<dbReference type="RNAct" id="Q8BFQ6">
    <property type="molecule type" value="protein"/>
</dbReference>
<dbReference type="Bgee" id="ENSMUSG00000022848">
    <property type="expression patterns" value="Expressed in hindlimb stylopod muscle and 228 other cell types or tissues"/>
</dbReference>
<dbReference type="ExpressionAtlas" id="Q8BFQ6">
    <property type="expression patterns" value="baseline and differential"/>
</dbReference>
<dbReference type="GO" id="GO:0005765">
    <property type="term" value="C:lysosomal membrane"/>
    <property type="evidence" value="ECO:0000250"/>
    <property type="project" value="UniProtKB"/>
</dbReference>
<dbReference type="GO" id="GO:0031923">
    <property type="term" value="P:pyridoxine transport"/>
    <property type="evidence" value="ECO:0000250"/>
    <property type="project" value="UniProtKB"/>
</dbReference>
<dbReference type="CDD" id="cd17397">
    <property type="entry name" value="MFS_DIRC2"/>
    <property type="match status" value="1"/>
</dbReference>
<dbReference type="FunFam" id="1.20.1250.20:FF:000162">
    <property type="entry name" value="disrupted in renal carcinoma protein 2"/>
    <property type="match status" value="1"/>
</dbReference>
<dbReference type="Gene3D" id="1.20.1250.20">
    <property type="entry name" value="MFS general substrate transporter like domains"/>
    <property type="match status" value="1"/>
</dbReference>
<dbReference type="InterPro" id="IPR049680">
    <property type="entry name" value="FLVCR1-2_SLC49-like"/>
</dbReference>
<dbReference type="InterPro" id="IPR036259">
    <property type="entry name" value="MFS_trans_sf"/>
</dbReference>
<dbReference type="InterPro" id="IPR049604">
    <property type="entry name" value="SLC49A4-like"/>
</dbReference>
<dbReference type="PANTHER" id="PTHR10924">
    <property type="entry name" value="MAJOR FACILITATOR SUPERFAMILY PROTEIN-RELATED"/>
    <property type="match status" value="1"/>
</dbReference>
<dbReference type="PANTHER" id="PTHR10924:SF27">
    <property type="entry name" value="SOLUTE CARRIER FAMILY 49 MEMBER 4"/>
    <property type="match status" value="1"/>
</dbReference>
<dbReference type="SUPFAM" id="SSF103473">
    <property type="entry name" value="MFS general substrate transporter"/>
    <property type="match status" value="1"/>
</dbReference>
<organism>
    <name type="scientific">Mus musculus</name>
    <name type="common">Mouse</name>
    <dbReference type="NCBI Taxonomy" id="10090"/>
    <lineage>
        <taxon>Eukaryota</taxon>
        <taxon>Metazoa</taxon>
        <taxon>Chordata</taxon>
        <taxon>Craniata</taxon>
        <taxon>Vertebrata</taxon>
        <taxon>Euteleostomi</taxon>
        <taxon>Mammalia</taxon>
        <taxon>Eutheria</taxon>
        <taxon>Euarchontoglires</taxon>
        <taxon>Glires</taxon>
        <taxon>Rodentia</taxon>
        <taxon>Myomorpha</taxon>
        <taxon>Muroidea</taxon>
        <taxon>Muridae</taxon>
        <taxon>Murinae</taxon>
        <taxon>Mus</taxon>
        <taxon>Mus</taxon>
    </lineage>
</organism>
<reference key="1">
    <citation type="journal article" date="2005" name="Science">
        <title>The transcriptional landscape of the mammalian genome.</title>
        <authorList>
            <person name="Carninci P."/>
            <person name="Kasukawa T."/>
            <person name="Katayama S."/>
            <person name="Gough J."/>
            <person name="Frith M.C."/>
            <person name="Maeda N."/>
            <person name="Oyama R."/>
            <person name="Ravasi T."/>
            <person name="Lenhard B."/>
            <person name="Wells C."/>
            <person name="Kodzius R."/>
            <person name="Shimokawa K."/>
            <person name="Bajic V.B."/>
            <person name="Brenner S.E."/>
            <person name="Batalov S."/>
            <person name="Forrest A.R."/>
            <person name="Zavolan M."/>
            <person name="Davis M.J."/>
            <person name="Wilming L.G."/>
            <person name="Aidinis V."/>
            <person name="Allen J.E."/>
            <person name="Ambesi-Impiombato A."/>
            <person name="Apweiler R."/>
            <person name="Aturaliya R.N."/>
            <person name="Bailey T.L."/>
            <person name="Bansal M."/>
            <person name="Baxter L."/>
            <person name="Beisel K.W."/>
            <person name="Bersano T."/>
            <person name="Bono H."/>
            <person name="Chalk A.M."/>
            <person name="Chiu K.P."/>
            <person name="Choudhary V."/>
            <person name="Christoffels A."/>
            <person name="Clutterbuck D.R."/>
            <person name="Crowe M.L."/>
            <person name="Dalla E."/>
            <person name="Dalrymple B.P."/>
            <person name="de Bono B."/>
            <person name="Della Gatta G."/>
            <person name="di Bernardo D."/>
            <person name="Down T."/>
            <person name="Engstrom P."/>
            <person name="Fagiolini M."/>
            <person name="Faulkner G."/>
            <person name="Fletcher C.F."/>
            <person name="Fukushima T."/>
            <person name="Furuno M."/>
            <person name="Futaki S."/>
            <person name="Gariboldi M."/>
            <person name="Georgii-Hemming P."/>
            <person name="Gingeras T.R."/>
            <person name="Gojobori T."/>
            <person name="Green R.E."/>
            <person name="Gustincich S."/>
            <person name="Harbers M."/>
            <person name="Hayashi Y."/>
            <person name="Hensch T.K."/>
            <person name="Hirokawa N."/>
            <person name="Hill D."/>
            <person name="Huminiecki L."/>
            <person name="Iacono M."/>
            <person name="Ikeo K."/>
            <person name="Iwama A."/>
            <person name="Ishikawa T."/>
            <person name="Jakt M."/>
            <person name="Kanapin A."/>
            <person name="Katoh M."/>
            <person name="Kawasawa Y."/>
            <person name="Kelso J."/>
            <person name="Kitamura H."/>
            <person name="Kitano H."/>
            <person name="Kollias G."/>
            <person name="Krishnan S.P."/>
            <person name="Kruger A."/>
            <person name="Kummerfeld S.K."/>
            <person name="Kurochkin I.V."/>
            <person name="Lareau L.F."/>
            <person name="Lazarevic D."/>
            <person name="Lipovich L."/>
            <person name="Liu J."/>
            <person name="Liuni S."/>
            <person name="McWilliam S."/>
            <person name="Madan Babu M."/>
            <person name="Madera M."/>
            <person name="Marchionni L."/>
            <person name="Matsuda H."/>
            <person name="Matsuzawa S."/>
            <person name="Miki H."/>
            <person name="Mignone F."/>
            <person name="Miyake S."/>
            <person name="Morris K."/>
            <person name="Mottagui-Tabar S."/>
            <person name="Mulder N."/>
            <person name="Nakano N."/>
            <person name="Nakauchi H."/>
            <person name="Ng P."/>
            <person name="Nilsson R."/>
            <person name="Nishiguchi S."/>
            <person name="Nishikawa S."/>
            <person name="Nori F."/>
            <person name="Ohara O."/>
            <person name="Okazaki Y."/>
            <person name="Orlando V."/>
            <person name="Pang K.C."/>
            <person name="Pavan W.J."/>
            <person name="Pavesi G."/>
            <person name="Pesole G."/>
            <person name="Petrovsky N."/>
            <person name="Piazza S."/>
            <person name="Reed J."/>
            <person name="Reid J.F."/>
            <person name="Ring B.Z."/>
            <person name="Ringwald M."/>
            <person name="Rost B."/>
            <person name="Ruan Y."/>
            <person name="Salzberg S.L."/>
            <person name="Sandelin A."/>
            <person name="Schneider C."/>
            <person name="Schoenbach C."/>
            <person name="Sekiguchi K."/>
            <person name="Semple C.A."/>
            <person name="Seno S."/>
            <person name="Sessa L."/>
            <person name="Sheng Y."/>
            <person name="Shibata Y."/>
            <person name="Shimada H."/>
            <person name="Shimada K."/>
            <person name="Silva D."/>
            <person name="Sinclair B."/>
            <person name="Sperling S."/>
            <person name="Stupka E."/>
            <person name="Sugiura K."/>
            <person name="Sultana R."/>
            <person name="Takenaka Y."/>
            <person name="Taki K."/>
            <person name="Tammoja K."/>
            <person name="Tan S.L."/>
            <person name="Tang S."/>
            <person name="Taylor M.S."/>
            <person name="Tegner J."/>
            <person name="Teichmann S.A."/>
            <person name="Ueda H.R."/>
            <person name="van Nimwegen E."/>
            <person name="Verardo R."/>
            <person name="Wei C.L."/>
            <person name="Yagi K."/>
            <person name="Yamanishi H."/>
            <person name="Zabarovsky E."/>
            <person name="Zhu S."/>
            <person name="Zimmer A."/>
            <person name="Hide W."/>
            <person name="Bult C."/>
            <person name="Grimmond S.M."/>
            <person name="Teasdale R.D."/>
            <person name="Liu E.T."/>
            <person name="Brusic V."/>
            <person name="Quackenbush J."/>
            <person name="Wahlestedt C."/>
            <person name="Mattick J.S."/>
            <person name="Hume D.A."/>
            <person name="Kai C."/>
            <person name="Sasaki D."/>
            <person name="Tomaru Y."/>
            <person name="Fukuda S."/>
            <person name="Kanamori-Katayama M."/>
            <person name="Suzuki M."/>
            <person name="Aoki J."/>
            <person name="Arakawa T."/>
            <person name="Iida J."/>
            <person name="Imamura K."/>
            <person name="Itoh M."/>
            <person name="Kato T."/>
            <person name="Kawaji H."/>
            <person name="Kawagashira N."/>
            <person name="Kawashima T."/>
            <person name="Kojima M."/>
            <person name="Kondo S."/>
            <person name="Konno H."/>
            <person name="Nakano K."/>
            <person name="Ninomiya N."/>
            <person name="Nishio T."/>
            <person name="Okada M."/>
            <person name="Plessy C."/>
            <person name="Shibata K."/>
            <person name="Shiraki T."/>
            <person name="Suzuki S."/>
            <person name="Tagami M."/>
            <person name="Waki K."/>
            <person name="Watahiki A."/>
            <person name="Okamura-Oho Y."/>
            <person name="Suzuki H."/>
            <person name="Kawai J."/>
            <person name="Hayashizaki Y."/>
        </authorList>
    </citation>
    <scope>NUCLEOTIDE SEQUENCE [LARGE SCALE MRNA]</scope>
    <source>
        <strain>C57BL/6J</strain>
        <strain>NOD</strain>
        <tissue>Diencephalon</tissue>
        <tissue>Spleen</tissue>
    </source>
</reference>
<reference key="2">
    <citation type="journal article" date="2004" name="Genome Res.">
        <title>The status, quality, and expansion of the NIH full-length cDNA project: the Mammalian Gene Collection (MGC).</title>
        <authorList>
            <consortium name="The MGC Project Team"/>
        </authorList>
    </citation>
    <scope>NUCLEOTIDE SEQUENCE [LARGE SCALE MRNA]</scope>
    <source>
        <strain>FVB/N</strain>
        <tissue>Salivary gland</tissue>
    </source>
</reference>
<keyword id="KW-0325">Glycoprotein</keyword>
<keyword id="KW-0458">Lysosome</keyword>
<keyword id="KW-0472">Membrane</keyword>
<keyword id="KW-1185">Reference proteome</keyword>
<keyword id="KW-0812">Transmembrane</keyword>
<keyword id="KW-1133">Transmembrane helix</keyword>
<keyword id="KW-0813">Transport</keyword>
<name>DIRC2_MOUSE</name>
<sequence length="478" mass="51909">MGSGWSSEEEERQPLLGPGLGPAPGAARRGREATAVLPAAGPNPGRVYGRRWLVLLLFSLLAFAQGLVWNTWGPIQNSARQAYGFSGWDIALLVLWGPIGFLPCFAFMWLLDKRGLRVTVLLTSFLMVLGTGLRCIPVSDLALKKRLIHGGQILNGLAGPTVMNAAPFLSTTWFSADERATATAIASMLSYLGGACAFLVGPLVVPAPNGTAPLLAAESSRAHIKDRIETVLYAEFGVVCLIFSATLAYFPPRPPLPPSVAAASQRLSYRRSFCRLLSNLRFLMIALAYAIPLGVFAGWSGVLDLILTPVHVSQVDAGWIGFWSIVGGCVVGIAMARFADFIRGMLKLILLLLFSGATLSSTWFTLTCLNSITHLPLTTVTLYASCILLGVFLNSSVPIFFELFVETVYPVPEGITCGVVTFLSNMFMGVLLFFVTFYHTELSWFNWCLPGSCLLSLLLILCFRESYDRLYLDVVVSV</sequence>